<dbReference type="EMBL" id="CP000249">
    <property type="protein sequence ID" value="ABD12912.1"/>
    <property type="molecule type" value="Genomic_DNA"/>
</dbReference>
<dbReference type="RefSeq" id="WP_011437936.1">
    <property type="nucleotide sequence ID" value="NZ_MSEA01000352.1"/>
</dbReference>
<dbReference type="SMR" id="Q2J730"/>
<dbReference type="STRING" id="106370.Francci3_3560"/>
<dbReference type="KEGG" id="fra:Francci3_3560"/>
<dbReference type="eggNOG" id="COG0858">
    <property type="taxonomic scope" value="Bacteria"/>
</dbReference>
<dbReference type="HOGENOM" id="CLU_089475_0_0_11"/>
<dbReference type="OrthoDB" id="307788at2"/>
<dbReference type="PhylomeDB" id="Q2J730"/>
<dbReference type="Proteomes" id="UP000001937">
    <property type="component" value="Chromosome"/>
</dbReference>
<dbReference type="GO" id="GO:0005829">
    <property type="term" value="C:cytosol"/>
    <property type="evidence" value="ECO:0007669"/>
    <property type="project" value="TreeGrafter"/>
</dbReference>
<dbReference type="GO" id="GO:0043024">
    <property type="term" value="F:ribosomal small subunit binding"/>
    <property type="evidence" value="ECO:0007669"/>
    <property type="project" value="TreeGrafter"/>
</dbReference>
<dbReference type="GO" id="GO:0030490">
    <property type="term" value="P:maturation of SSU-rRNA"/>
    <property type="evidence" value="ECO:0007669"/>
    <property type="project" value="UniProtKB-UniRule"/>
</dbReference>
<dbReference type="Gene3D" id="3.30.300.20">
    <property type="match status" value="1"/>
</dbReference>
<dbReference type="HAMAP" id="MF_00003">
    <property type="entry name" value="RbfA"/>
    <property type="match status" value="1"/>
</dbReference>
<dbReference type="InterPro" id="IPR015946">
    <property type="entry name" value="KH_dom-like_a/b"/>
</dbReference>
<dbReference type="InterPro" id="IPR000238">
    <property type="entry name" value="RbfA"/>
</dbReference>
<dbReference type="InterPro" id="IPR023799">
    <property type="entry name" value="RbfA_dom_sf"/>
</dbReference>
<dbReference type="InterPro" id="IPR020053">
    <property type="entry name" value="Ribosome-bd_factorA_CS"/>
</dbReference>
<dbReference type="NCBIfam" id="TIGR00082">
    <property type="entry name" value="rbfA"/>
    <property type="match status" value="1"/>
</dbReference>
<dbReference type="PANTHER" id="PTHR33515">
    <property type="entry name" value="RIBOSOME-BINDING FACTOR A, CHLOROPLASTIC-RELATED"/>
    <property type="match status" value="1"/>
</dbReference>
<dbReference type="PANTHER" id="PTHR33515:SF1">
    <property type="entry name" value="RIBOSOME-BINDING FACTOR A, CHLOROPLASTIC-RELATED"/>
    <property type="match status" value="1"/>
</dbReference>
<dbReference type="Pfam" id="PF02033">
    <property type="entry name" value="RBFA"/>
    <property type="match status" value="1"/>
</dbReference>
<dbReference type="SUPFAM" id="SSF89919">
    <property type="entry name" value="Ribosome-binding factor A, RbfA"/>
    <property type="match status" value="1"/>
</dbReference>
<dbReference type="PROSITE" id="PS01319">
    <property type="entry name" value="RBFA"/>
    <property type="match status" value="1"/>
</dbReference>
<feature type="chain" id="PRO_1000000106" description="Ribosome-binding factor A">
    <location>
        <begin position="1"/>
        <end position="168"/>
    </location>
</feature>
<feature type="region of interest" description="Disordered" evidence="2">
    <location>
        <begin position="122"/>
        <end position="168"/>
    </location>
</feature>
<feature type="compositionally biased region" description="Basic and acidic residues" evidence="2">
    <location>
        <begin position="122"/>
        <end position="136"/>
    </location>
</feature>
<feature type="compositionally biased region" description="Acidic residues" evidence="2">
    <location>
        <begin position="144"/>
        <end position="159"/>
    </location>
</feature>
<protein>
    <recommendedName>
        <fullName evidence="1">Ribosome-binding factor A</fullName>
    </recommendedName>
</protein>
<organism>
    <name type="scientific">Frankia casuarinae (strain DSM 45818 / CECT 9043 / HFP020203 / CcI3)</name>
    <dbReference type="NCBI Taxonomy" id="106370"/>
    <lineage>
        <taxon>Bacteria</taxon>
        <taxon>Bacillati</taxon>
        <taxon>Actinomycetota</taxon>
        <taxon>Actinomycetes</taxon>
        <taxon>Frankiales</taxon>
        <taxon>Frankiaceae</taxon>
        <taxon>Frankia</taxon>
    </lineage>
</organism>
<name>RBFA_FRACC</name>
<reference key="1">
    <citation type="journal article" date="2007" name="Genome Res.">
        <title>Genome characteristics of facultatively symbiotic Frankia sp. strains reflect host range and host plant biogeography.</title>
        <authorList>
            <person name="Normand P."/>
            <person name="Lapierre P."/>
            <person name="Tisa L.S."/>
            <person name="Gogarten J.P."/>
            <person name="Alloisio N."/>
            <person name="Bagnarol E."/>
            <person name="Bassi C.A."/>
            <person name="Berry A.M."/>
            <person name="Bickhart D.M."/>
            <person name="Choisne N."/>
            <person name="Couloux A."/>
            <person name="Cournoyer B."/>
            <person name="Cruveiller S."/>
            <person name="Daubin V."/>
            <person name="Demange N."/>
            <person name="Francino M.P."/>
            <person name="Goltsman E."/>
            <person name="Huang Y."/>
            <person name="Kopp O.R."/>
            <person name="Labarre L."/>
            <person name="Lapidus A."/>
            <person name="Lavire C."/>
            <person name="Marechal J."/>
            <person name="Martinez M."/>
            <person name="Mastronunzio J.E."/>
            <person name="Mullin B.C."/>
            <person name="Niemann J."/>
            <person name="Pujic P."/>
            <person name="Rawnsley T."/>
            <person name="Rouy Z."/>
            <person name="Schenowitz C."/>
            <person name="Sellstedt A."/>
            <person name="Tavares F."/>
            <person name="Tomkins J.P."/>
            <person name="Vallenet D."/>
            <person name="Valverde C."/>
            <person name="Wall L.G."/>
            <person name="Wang Y."/>
            <person name="Medigue C."/>
            <person name="Benson D.R."/>
        </authorList>
    </citation>
    <scope>NUCLEOTIDE SEQUENCE [LARGE SCALE GENOMIC DNA]</scope>
    <source>
        <strain>DSM 45818 / CECT 9043 / HFP020203 / CcI3</strain>
    </source>
</reference>
<gene>
    <name evidence="1" type="primary">rbfA</name>
    <name type="ordered locus">Francci3_3560</name>
</gene>
<keyword id="KW-0963">Cytoplasm</keyword>
<keyword id="KW-1185">Reference proteome</keyword>
<keyword id="KW-0690">Ribosome biogenesis</keyword>
<comment type="function">
    <text evidence="1">One of several proteins that assist in the late maturation steps of the functional core of the 30S ribosomal subunit. Associates with free 30S ribosomal subunits (but not with 30S subunits that are part of 70S ribosomes or polysomes). Required for efficient processing of 16S rRNA. May interact with the 5'-terminal helix region of 16S rRNA.</text>
</comment>
<comment type="subunit">
    <text evidence="1">Monomer. Binds 30S ribosomal subunits, but not 50S ribosomal subunits or 70S ribosomes.</text>
</comment>
<comment type="subcellular location">
    <subcellularLocation>
        <location evidence="1">Cytoplasm</location>
    </subcellularLocation>
</comment>
<comment type="similarity">
    <text evidence="1">Belongs to the RbfA family.</text>
</comment>
<proteinExistence type="inferred from homology"/>
<evidence type="ECO:0000255" key="1">
    <source>
        <dbReference type="HAMAP-Rule" id="MF_00003"/>
    </source>
</evidence>
<evidence type="ECO:0000256" key="2">
    <source>
        <dbReference type="SAM" id="MobiDB-lite"/>
    </source>
</evidence>
<sequence>MADPARARRLAVRIREVVASTLERGVKDPRLGMVTVTDVRLTPDLVDATVFYTVYGDETARQASAQALESARGLLRSQVGRATGVKVTPTLTFVHDRLPDDAQHLEKLISVARERDAYLAEVRRDARPAGDDDPYRRPRPAAGEVDELSEVDELSEVDEYGGTARQEG</sequence>
<accession>Q2J730</accession>